<keyword id="KW-0063">Aspartyl esterase</keyword>
<keyword id="KW-0134">Cell wall</keyword>
<keyword id="KW-0961">Cell wall biogenesis/degradation</keyword>
<keyword id="KW-0325">Glycoprotein</keyword>
<keyword id="KW-0378">Hydrolase</keyword>
<keyword id="KW-1185">Reference proteome</keyword>
<keyword id="KW-0964">Secreted</keyword>
<keyword id="KW-0732">Signal</keyword>
<name>PME4_ARATH</name>
<comment type="function">
    <text evidence="4">Acts in the modification of cell walls via demethylesterification of cell wall pectin. Plays an important role in growth of pollen tubes in female floral tissues, possibly via enhancing the interaction between the pollen tube and female floral tissues by modification of the cell walls.</text>
</comment>
<comment type="catalytic activity">
    <reaction>
        <text>[(1-&gt;4)-alpha-D-galacturonosyl methyl ester](n) + n H2O = [(1-&gt;4)-alpha-D-galacturonosyl](n) + n methanol + n H(+)</text>
        <dbReference type="Rhea" id="RHEA:22380"/>
        <dbReference type="Rhea" id="RHEA-COMP:14570"/>
        <dbReference type="Rhea" id="RHEA-COMP:14573"/>
        <dbReference type="ChEBI" id="CHEBI:15377"/>
        <dbReference type="ChEBI" id="CHEBI:15378"/>
        <dbReference type="ChEBI" id="CHEBI:17790"/>
        <dbReference type="ChEBI" id="CHEBI:140522"/>
        <dbReference type="ChEBI" id="CHEBI:140523"/>
        <dbReference type="EC" id="3.1.1.11"/>
    </reaction>
</comment>
<comment type="pathway">
    <text>Glycan metabolism; pectin degradation; 2-dehydro-3-deoxy-D-gluconate from pectin: step 1/5.</text>
</comment>
<comment type="subcellular location">
    <subcellularLocation>
        <location evidence="5">Secreted</location>
        <location evidence="5">Cell wall</location>
    </subcellularLocation>
</comment>
<comment type="tissue specificity">
    <text evidence="4">Expressed in pollen grains and pollen tubes.</text>
</comment>
<comment type="miscellaneous">
    <text>The PMEI region may act as an autoinhibitory domain and prevent untimely PME activity during transport.</text>
</comment>
<comment type="similarity">
    <text evidence="5">In the N-terminal section; belongs to the PMEI family.</text>
</comment>
<comment type="similarity">
    <text evidence="5">In the C-terminal section; belongs to the pectinesterase family.</text>
</comment>
<comment type="sequence caution" evidence="5">
    <conflict type="miscellaneous discrepancy">
        <sequence resource="EMBL-CDS" id="AAN15509"/>
    </conflict>
    <text>Probable cloning artifact leading to a large internal deletion.</text>
</comment>
<organism>
    <name type="scientific">Arabidopsis thaliana</name>
    <name type="common">Mouse-ear cress</name>
    <dbReference type="NCBI Taxonomy" id="3702"/>
    <lineage>
        <taxon>Eukaryota</taxon>
        <taxon>Viridiplantae</taxon>
        <taxon>Streptophyta</taxon>
        <taxon>Embryophyta</taxon>
        <taxon>Tracheophyta</taxon>
        <taxon>Spermatophyta</taxon>
        <taxon>Magnoliopsida</taxon>
        <taxon>eudicotyledons</taxon>
        <taxon>Gunneridae</taxon>
        <taxon>Pentapetalae</taxon>
        <taxon>rosids</taxon>
        <taxon>malvids</taxon>
        <taxon>Brassicales</taxon>
        <taxon>Brassicaceae</taxon>
        <taxon>Camelineae</taxon>
        <taxon>Arabidopsis</taxon>
    </lineage>
</organism>
<accession>O80722</accession>
<accession>Q5MFV7</accession>
<accession>Q8H194</accession>
<accession>Q9T0P8</accession>
<reference key="1">
    <citation type="journal article" date="2005" name="Plant Cell">
        <title>VANGUARD1 encodes a pectin methylesterase that enhances pollen tube growth in the Arabidopsis style and transmitting tract.</title>
        <authorList>
            <person name="Jiang L."/>
            <person name="Yang S.-L."/>
            <person name="Xie L.-F."/>
            <person name="Puah C.S."/>
            <person name="Zhang X.-Q."/>
            <person name="Yang W.-C."/>
            <person name="Sundaresan V."/>
            <person name="Ye D."/>
        </authorList>
    </citation>
    <scope>NUCLEOTIDE SEQUENCE [MRNA]</scope>
    <scope>FUNCTION</scope>
    <scope>TISSUE SPECIFICITY</scope>
    <source>
        <strain>cv. Landsberg erecta</strain>
    </source>
</reference>
<reference key="2">
    <citation type="submission" date="1998-07" db="EMBL/GenBank/DDBJ databases">
        <title>Molecular characterization of AtPME4: a flower-specific gene encoding pectin methylesterase in Arabidopsis thaliana.</title>
        <authorList>
            <person name="Richard L."/>
            <person name="Micheli F."/>
            <person name="Goldberg R."/>
        </authorList>
    </citation>
    <scope>NUCLEOTIDE SEQUENCE [GENOMIC DNA]</scope>
    <source>
        <strain>cv. Wassilewskija</strain>
        <tissue>Flower</tissue>
    </source>
</reference>
<reference key="3">
    <citation type="journal article" date="1999" name="Nature">
        <title>Sequence and analysis of chromosome 2 of the plant Arabidopsis thaliana.</title>
        <authorList>
            <person name="Lin X."/>
            <person name="Kaul S."/>
            <person name="Rounsley S.D."/>
            <person name="Shea T.P."/>
            <person name="Benito M.-I."/>
            <person name="Town C.D."/>
            <person name="Fujii C.Y."/>
            <person name="Mason T.M."/>
            <person name="Bowman C.L."/>
            <person name="Barnstead M.E."/>
            <person name="Feldblyum T.V."/>
            <person name="Buell C.R."/>
            <person name="Ketchum K.A."/>
            <person name="Lee J.J."/>
            <person name="Ronning C.M."/>
            <person name="Koo H.L."/>
            <person name="Moffat K.S."/>
            <person name="Cronin L.A."/>
            <person name="Shen M."/>
            <person name="Pai G."/>
            <person name="Van Aken S."/>
            <person name="Umayam L."/>
            <person name="Tallon L.J."/>
            <person name="Gill J.E."/>
            <person name="Adams M.D."/>
            <person name="Carrera A.J."/>
            <person name="Creasy T.H."/>
            <person name="Goodman H.M."/>
            <person name="Somerville C.R."/>
            <person name="Copenhaver G.P."/>
            <person name="Preuss D."/>
            <person name="Nierman W.C."/>
            <person name="White O."/>
            <person name="Eisen J.A."/>
            <person name="Salzberg S.L."/>
            <person name="Fraser C.M."/>
            <person name="Venter J.C."/>
        </authorList>
    </citation>
    <scope>NUCLEOTIDE SEQUENCE [LARGE SCALE GENOMIC DNA]</scope>
    <source>
        <strain>cv. Columbia</strain>
    </source>
</reference>
<reference key="4">
    <citation type="journal article" date="2017" name="Plant J.">
        <title>Araport11: a complete reannotation of the Arabidopsis thaliana reference genome.</title>
        <authorList>
            <person name="Cheng C.Y."/>
            <person name="Krishnakumar V."/>
            <person name="Chan A.P."/>
            <person name="Thibaud-Nissen F."/>
            <person name="Schobel S."/>
            <person name="Town C.D."/>
        </authorList>
    </citation>
    <scope>GENOME REANNOTATION</scope>
    <source>
        <strain>cv. Columbia</strain>
    </source>
</reference>
<reference key="5">
    <citation type="journal article" date="2003" name="Science">
        <title>Empirical analysis of transcriptional activity in the Arabidopsis genome.</title>
        <authorList>
            <person name="Yamada K."/>
            <person name="Lim J."/>
            <person name="Dale J.M."/>
            <person name="Chen H."/>
            <person name="Shinn P."/>
            <person name="Palm C.J."/>
            <person name="Southwick A.M."/>
            <person name="Wu H.C."/>
            <person name="Kim C.J."/>
            <person name="Nguyen M."/>
            <person name="Pham P.K."/>
            <person name="Cheuk R.F."/>
            <person name="Karlin-Newmann G."/>
            <person name="Liu S.X."/>
            <person name="Lam B."/>
            <person name="Sakano H."/>
            <person name="Wu T."/>
            <person name="Yu G."/>
            <person name="Miranda M."/>
            <person name="Quach H.L."/>
            <person name="Tripp M."/>
            <person name="Chang C.H."/>
            <person name="Lee J.M."/>
            <person name="Toriumi M.J."/>
            <person name="Chan M.M."/>
            <person name="Tang C.C."/>
            <person name="Onodera C.S."/>
            <person name="Deng J.M."/>
            <person name="Akiyama K."/>
            <person name="Ansari Y."/>
            <person name="Arakawa T."/>
            <person name="Banh J."/>
            <person name="Banno F."/>
            <person name="Bowser L."/>
            <person name="Brooks S.Y."/>
            <person name="Carninci P."/>
            <person name="Chao Q."/>
            <person name="Choy N."/>
            <person name="Enju A."/>
            <person name="Goldsmith A.D."/>
            <person name="Gurjal M."/>
            <person name="Hansen N.F."/>
            <person name="Hayashizaki Y."/>
            <person name="Johnson-Hopson C."/>
            <person name="Hsuan V.W."/>
            <person name="Iida K."/>
            <person name="Karnes M."/>
            <person name="Khan S."/>
            <person name="Koesema E."/>
            <person name="Ishida J."/>
            <person name="Jiang P.X."/>
            <person name="Jones T."/>
            <person name="Kawai J."/>
            <person name="Kamiya A."/>
            <person name="Meyers C."/>
            <person name="Nakajima M."/>
            <person name="Narusaka M."/>
            <person name="Seki M."/>
            <person name="Sakurai T."/>
            <person name="Satou M."/>
            <person name="Tamse R."/>
            <person name="Vaysberg M."/>
            <person name="Wallender E.K."/>
            <person name="Wong C."/>
            <person name="Yamamura Y."/>
            <person name="Yuan S."/>
            <person name="Shinozaki K."/>
            <person name="Davis R.W."/>
            <person name="Theologis A."/>
            <person name="Ecker J.R."/>
        </authorList>
    </citation>
    <scope>NUCLEOTIDE SEQUENCE [LARGE SCALE MRNA]</scope>
    <source>
        <strain>cv. Columbia</strain>
    </source>
</reference>
<reference key="6">
    <citation type="journal article" date="2004" name="Carbohydr. Res.">
        <title>Pectin methylesterases: sequence-structural features and phylogenetic relationships.</title>
        <authorList>
            <person name="Markovic O."/>
            <person name="Janecek S."/>
        </authorList>
    </citation>
    <scope>GENE FAMILY</scope>
    <scope>NOMENCLATURE</scope>
</reference>
<reference key="7">
    <citation type="journal article" date="2006" name="Planta">
        <title>Comprehensive expression profiling of the pectin methylesterase gene family during silique development in Arabidopsis thaliana.</title>
        <authorList>
            <person name="Louvet R."/>
            <person name="Cavel E."/>
            <person name="Gutierrez L."/>
            <person name="Guenin S."/>
            <person name="Roger D."/>
            <person name="Gillet F."/>
            <person name="Guerineau F."/>
            <person name="Pelloux J."/>
        </authorList>
    </citation>
    <scope>DEVELOPMENTAL STAGE</scope>
</reference>
<protein>
    <recommendedName>
        <fullName>Pectinesterase 4</fullName>
        <shortName>PE 4</shortName>
        <ecNumber>3.1.1.11</ecNumber>
    </recommendedName>
    <alternativeName>
        <fullName>Pectin methylesterase 18</fullName>
        <shortName>AtPME18</shortName>
    </alternativeName>
    <alternativeName>
        <fullName>Pectin methylesterase 4</fullName>
        <shortName>AtPME4</shortName>
    </alternativeName>
    <alternativeName>
        <fullName>VANGUARD1-like protein 1</fullName>
        <shortName>VGD1-like protein 1</shortName>
    </alternativeName>
</protein>
<proteinExistence type="evidence at transcript level"/>
<feature type="signal peptide" evidence="2">
    <location>
        <begin position="1"/>
        <end position="24"/>
    </location>
</feature>
<feature type="chain" id="PRO_0000023476" description="Pectinesterase 4">
    <location>
        <begin position="25"/>
        <end position="588"/>
    </location>
</feature>
<feature type="active site" description="Proton donor" evidence="3">
    <location>
        <position position="406"/>
    </location>
</feature>
<feature type="active site" description="Nucleophile" evidence="3">
    <location>
        <position position="427"/>
    </location>
</feature>
<feature type="binding site" evidence="1">
    <location>
        <position position="353"/>
    </location>
    <ligand>
        <name>substrate</name>
    </ligand>
</feature>
<feature type="binding site" evidence="1">
    <location>
        <position position="383"/>
    </location>
    <ligand>
        <name>substrate</name>
    </ligand>
</feature>
<feature type="binding site" evidence="1">
    <location>
        <position position="496"/>
    </location>
    <ligand>
        <name>substrate</name>
    </ligand>
</feature>
<feature type="binding site" evidence="1">
    <location>
        <position position="498"/>
    </location>
    <ligand>
        <name>substrate</name>
    </ligand>
</feature>
<feature type="site" description="Transition state stabilizer" evidence="1">
    <location>
        <position position="405"/>
    </location>
</feature>
<feature type="glycosylation site" description="N-linked (GlcNAc...) asparagine" evidence="2">
    <location>
        <position position="86"/>
    </location>
</feature>
<feature type="glycosylation site" description="N-linked (GlcNAc...) asparagine" evidence="2">
    <location>
        <position position="206"/>
    </location>
</feature>
<feature type="glycosylation site" description="N-linked (GlcNAc...) asparagine" evidence="2">
    <location>
        <position position="342"/>
    </location>
</feature>
<feature type="sequence conflict" description="In Ref. 1; AAV91509." evidence="5" ref="1">
    <original>Q</original>
    <variation>R</variation>
    <location>
        <position position="46"/>
    </location>
</feature>
<feature type="sequence conflict" description="In Ref. 1; AAV91509." evidence="5" ref="1">
    <original>T</original>
    <variation>A</variation>
    <location>
        <position position="275"/>
    </location>
</feature>
<feature type="sequence conflict" description="In Ref. 1; AAV91509." evidence="5" ref="1">
    <original>K</original>
    <variation>N</variation>
    <location>
        <position position="324"/>
    </location>
</feature>
<feature type="sequence conflict" description="In Ref. 2; AAC27719." evidence="5" ref="2">
    <location>
        <begin position="359"/>
        <end position="360"/>
    </location>
</feature>
<feature type="sequence conflict" description="In Ref. 1; AAV91509." evidence="5" ref="1">
    <original>V</original>
    <variation>A</variation>
    <location>
        <position position="550"/>
    </location>
</feature>
<feature type="sequence conflict" description="In Ref. 1; AAV91509." evidence="5" ref="1">
    <original>N</original>
    <variation>S</variation>
    <location>
        <position position="563"/>
    </location>
</feature>
<evidence type="ECO:0000250" key="1"/>
<evidence type="ECO:0000255" key="2"/>
<evidence type="ECO:0000255" key="3">
    <source>
        <dbReference type="PROSITE-ProRule" id="PRU10040"/>
    </source>
</evidence>
<evidence type="ECO:0000269" key="4">
    <source>
    </source>
</evidence>
<evidence type="ECO:0000305" key="5"/>
<dbReference type="EC" id="3.1.1.11"/>
<dbReference type="EMBL" id="AY830949">
    <property type="protein sequence ID" value="AAV91509.1"/>
    <property type="molecule type" value="mRNA"/>
</dbReference>
<dbReference type="EMBL" id="AF077855">
    <property type="protein sequence ID" value="AAC27719.1"/>
    <property type="molecule type" value="Genomic_DNA"/>
</dbReference>
<dbReference type="EMBL" id="AC004411">
    <property type="protein sequence ID" value="AAC34241.1"/>
    <property type="molecule type" value="Genomic_DNA"/>
</dbReference>
<dbReference type="EMBL" id="CP002685">
    <property type="protein sequence ID" value="AEC10790.1"/>
    <property type="molecule type" value="Genomic_DNA"/>
</dbReference>
<dbReference type="EMBL" id="AY054462">
    <property type="protein sequence ID" value="AAK96654.1"/>
    <property type="molecule type" value="mRNA"/>
</dbReference>
<dbReference type="EMBL" id="BT000190">
    <property type="protein sequence ID" value="AAN15509.1"/>
    <property type="status" value="ALT_SEQ"/>
    <property type="molecule type" value="mRNA"/>
</dbReference>
<dbReference type="PIR" id="T02184">
    <property type="entry name" value="T02184"/>
</dbReference>
<dbReference type="PIR" id="T52330">
    <property type="entry name" value="T52330"/>
</dbReference>
<dbReference type="RefSeq" id="NP_182226.1">
    <property type="nucleotide sequence ID" value="NM_130271.3"/>
</dbReference>
<dbReference type="SMR" id="O80722"/>
<dbReference type="BioGRID" id="4652">
    <property type="interactions" value="1"/>
</dbReference>
<dbReference type="FunCoup" id="O80722">
    <property type="interactions" value="141"/>
</dbReference>
<dbReference type="IntAct" id="O80722">
    <property type="interactions" value="1"/>
</dbReference>
<dbReference type="STRING" id="3702.O80722"/>
<dbReference type="GlyCosmos" id="O80722">
    <property type="glycosylation" value="3 sites, No reported glycans"/>
</dbReference>
<dbReference type="GlyGen" id="O80722">
    <property type="glycosylation" value="4 sites"/>
</dbReference>
<dbReference type="PaxDb" id="3702-AT2G47030.1"/>
<dbReference type="ProteomicsDB" id="234689"/>
<dbReference type="EnsemblPlants" id="AT2G47030.1">
    <property type="protein sequence ID" value="AT2G47030.1"/>
    <property type="gene ID" value="AT2G47030"/>
</dbReference>
<dbReference type="GeneID" id="819317"/>
<dbReference type="Gramene" id="AT2G47030.1">
    <property type="protein sequence ID" value="AT2G47030.1"/>
    <property type="gene ID" value="AT2G47030"/>
</dbReference>
<dbReference type="KEGG" id="ath:AT2G47030"/>
<dbReference type="Araport" id="AT2G47030"/>
<dbReference type="TAIR" id="AT2G47030">
    <property type="gene designation" value="VGDH1"/>
</dbReference>
<dbReference type="eggNOG" id="ENOG502QUTX">
    <property type="taxonomic scope" value="Eukaryota"/>
</dbReference>
<dbReference type="HOGENOM" id="CLU_012243_9_0_1"/>
<dbReference type="InParanoid" id="O80722"/>
<dbReference type="OMA" id="NTEHAFF"/>
<dbReference type="PhylomeDB" id="O80722"/>
<dbReference type="BioCyc" id="ARA:AT2G47030-MONOMER"/>
<dbReference type="BRENDA" id="3.1.1.11">
    <property type="organism ID" value="399"/>
</dbReference>
<dbReference type="UniPathway" id="UPA00545">
    <property type="reaction ID" value="UER00823"/>
</dbReference>
<dbReference type="PRO" id="PR:O80722"/>
<dbReference type="Proteomes" id="UP000006548">
    <property type="component" value="Chromosome 2"/>
</dbReference>
<dbReference type="ExpressionAtlas" id="O80722">
    <property type="expression patterns" value="baseline and differential"/>
</dbReference>
<dbReference type="GO" id="GO:0005576">
    <property type="term" value="C:extracellular region"/>
    <property type="evidence" value="ECO:0007669"/>
    <property type="project" value="UniProtKB-KW"/>
</dbReference>
<dbReference type="GO" id="GO:0009506">
    <property type="term" value="C:plasmodesma"/>
    <property type="evidence" value="ECO:0007005"/>
    <property type="project" value="TAIR"/>
</dbReference>
<dbReference type="GO" id="GO:0090406">
    <property type="term" value="C:pollen tube"/>
    <property type="evidence" value="ECO:0000314"/>
    <property type="project" value="TAIR"/>
</dbReference>
<dbReference type="GO" id="GO:0004857">
    <property type="term" value="F:enzyme inhibitor activity"/>
    <property type="evidence" value="ECO:0007669"/>
    <property type="project" value="InterPro"/>
</dbReference>
<dbReference type="GO" id="GO:0030599">
    <property type="term" value="F:pectinesterase activity"/>
    <property type="evidence" value="ECO:0007669"/>
    <property type="project" value="UniProtKB-EC"/>
</dbReference>
<dbReference type="GO" id="GO:0042545">
    <property type="term" value="P:cell wall modification"/>
    <property type="evidence" value="ECO:0007669"/>
    <property type="project" value="InterPro"/>
</dbReference>
<dbReference type="GO" id="GO:0045490">
    <property type="term" value="P:pectin catabolic process"/>
    <property type="evidence" value="ECO:0007669"/>
    <property type="project" value="UniProtKB-UniPathway"/>
</dbReference>
<dbReference type="CDD" id="cd15798">
    <property type="entry name" value="PMEI-like_3"/>
    <property type="match status" value="1"/>
</dbReference>
<dbReference type="FunFam" id="1.20.140.40:FF:000016">
    <property type="entry name" value="Pectinesterase"/>
    <property type="match status" value="1"/>
</dbReference>
<dbReference type="FunFam" id="2.160.20.10:FF:000029">
    <property type="entry name" value="Pectinesterase 4"/>
    <property type="match status" value="1"/>
</dbReference>
<dbReference type="Gene3D" id="1.20.140.40">
    <property type="entry name" value="Invertase/pectin methylesterase inhibitor family protein"/>
    <property type="match status" value="1"/>
</dbReference>
<dbReference type="Gene3D" id="2.160.20.10">
    <property type="entry name" value="Single-stranded right-handed beta-helix, Pectin lyase-like"/>
    <property type="match status" value="1"/>
</dbReference>
<dbReference type="InterPro" id="IPR035513">
    <property type="entry name" value="Invertase/methylesterase_inhib"/>
</dbReference>
<dbReference type="InterPro" id="IPR012334">
    <property type="entry name" value="Pectin_lyas_fold"/>
</dbReference>
<dbReference type="InterPro" id="IPR011050">
    <property type="entry name" value="Pectin_lyase_fold/virulence"/>
</dbReference>
<dbReference type="InterPro" id="IPR033131">
    <property type="entry name" value="Pectinesterase_Asp_AS"/>
</dbReference>
<dbReference type="InterPro" id="IPR000070">
    <property type="entry name" value="Pectinesterase_cat"/>
</dbReference>
<dbReference type="InterPro" id="IPR006501">
    <property type="entry name" value="Pectinesterase_inhib_dom"/>
</dbReference>
<dbReference type="NCBIfam" id="TIGR01614">
    <property type="entry name" value="PME_inhib"/>
    <property type="match status" value="1"/>
</dbReference>
<dbReference type="PANTHER" id="PTHR31707">
    <property type="entry name" value="PECTINESTERASE"/>
    <property type="match status" value="1"/>
</dbReference>
<dbReference type="Pfam" id="PF01095">
    <property type="entry name" value="Pectinesterase"/>
    <property type="match status" value="1"/>
</dbReference>
<dbReference type="Pfam" id="PF04043">
    <property type="entry name" value="PMEI"/>
    <property type="match status" value="1"/>
</dbReference>
<dbReference type="SMART" id="SM00856">
    <property type="entry name" value="PMEI"/>
    <property type="match status" value="1"/>
</dbReference>
<dbReference type="SUPFAM" id="SSF51126">
    <property type="entry name" value="Pectin lyase-like"/>
    <property type="match status" value="1"/>
</dbReference>
<dbReference type="SUPFAM" id="SSF101148">
    <property type="entry name" value="Plant invertase/pectin methylesterase inhibitor"/>
    <property type="match status" value="1"/>
</dbReference>
<dbReference type="PROSITE" id="PS00503">
    <property type="entry name" value="PECTINESTERASE_2"/>
    <property type="match status" value="1"/>
</dbReference>
<gene>
    <name type="primary">PME4</name>
    <name type="synonym">ARATH18</name>
    <name type="synonym">VGDH1</name>
    <name type="ordered locus">At2g47030</name>
    <name type="ORF">F14M4.14</name>
</gene>
<sequence length="588" mass="64138">MIGKVVVSVASILLIVGVAIGVVAFINKNGDANLSPQMKAVQGICQSTSDKASCVKTLEPVKSEDPNKLIKAFMLATKDELTKSSNFTGQTEVNMGSSISPNNKAVLDYCKRVFMYALEDLATIIEEMGEDLSQIGSKIDQLKQWLIGVYNYQTDCLDDIEEDDLRKAIGEGIANSKILTTNAIDIFHTVVSAMAKINNKVDDLKNMTGGIPTPGAPPVVDESPVADPDGPARRLLEDIDETGIPTWVSGADRKLMAKAGRGRRGGRGGGARVRTNFVVAKDGSGQFKTVQQAVDACPENNRGRCIIYIKAGLYREQVIIPKKKNNIFMFGDGARKTVISYNRSVALSRGTTTSLSATVQVESEGFMAKWMGFKNTAGPMGHQAAAIRVNGDRAVIFNCRFDGYQDTLYVNNGRQFYRNCVVSGTVDFIFGKSATVIQNTLIVVRKGSKGQYNTVTADGNELGLGMKIGIVLQNCRIVPDRKLTPERLTVATYLGRPWKKFSTTVIMSTEMGDLIRPEGWKIWDGESFHKSCRYVEYNNRGPGAFANRRVNWAKVARSAAEVNGFTAANWLGPINWIQEANVPVTIGL</sequence>